<sequence length="364" mass="40771">MVVNFKVFKKCSPNNMITLYMNRRDFVDSVTQVEPIDGIIVLDDEYVRQNRKIFVQLVCNFRYGREDDEMIGLRFQKELTLVSQQVCPPQKQDIQLTKMQERLLKKLGSNAYPFVMQMPPSSPASVVLQQKASDESQPCGVQYFVKIFTGDSDCDRSHRRSTINLGIRKVQYAPTKQGIQPCTVVRKDFLLSPGELELEVTLDKQLYHHGEKISVNICVRNNSNKVVKKIKAMVQQGVDVVLFQNGQFRNTIAFMETSEGCPLNPGSSLQKVMYLVPTLVANCDRAGIAVEGDIKRKDTALASTTLIASQDARDAFGIIVSYAVKVKLFLGALGGELCAELPFILMHPKPSRKAQLEAEGSIEA</sequence>
<comment type="function">
    <text evidence="3 4">Regulates photoreceptor cell deactivation (PubMed:8316831). Arr1 and Arr2 proteins are mediators of rhodopsin inactivation and are essential for the termination of the phototransduction cascade (PubMed:8316831). Involved in regulating normal cycles of per nuclear accumulation in brain circadian neurons and thus is important for normal circadian behavior (PubMed:36994075). In the dark, functions with Arr2 to promote the formation of cytosolic Bdbt foci, which are required for dco localization to photoreceptor nuclei where it phosphorylates and activates degradation of per (PubMed:36994075).</text>
</comment>
<comment type="subcellular location">
    <subcellularLocation>
        <location evidence="4">Cell projection</location>
        <location evidence="4">Rhabdomere</location>
    </subcellularLocation>
</comment>
<comment type="tissue specificity">
    <text evidence="1 4">Expressed specifically and abundantly in photoreceptor cells in retina and ocelli.</text>
</comment>
<comment type="developmental stage">
    <text evidence="1">Accumulates to detectable levels by late pupation at 8 days reaching maximum levels after eclosion at 10 days.</text>
</comment>
<comment type="PTM">
    <text evidence="2">Phosphorylated, but does not undergo light-induced phosphorylation.</text>
</comment>
<comment type="similarity">
    <text evidence="5">Belongs to the arrestin family.</text>
</comment>
<reference key="1">
    <citation type="journal article" date="1990" name="Proc. Natl. Acad. Sci. U.S.A.">
        <title>Isolation and structure of an arrestin gene from Drosophila.</title>
        <authorList>
            <person name="Smith D.P."/>
            <person name="Sheih B.-H."/>
            <person name="Zuker C.S."/>
        </authorList>
    </citation>
    <scope>NUCLEOTIDE SEQUENCE [GENOMIC DNA]</scope>
    <scope>TISSUE SPECIFICITY</scope>
    <scope>DEVELOPMENTAL STAGE</scope>
</reference>
<reference key="2">
    <citation type="journal article" date="1990" name="Proc. Natl. Acad. Sci. U.S.A.">
        <title>Twenty Drosophila visual system cDNA clones: one is a homolog of human arrestin.</title>
        <authorList>
            <person name="Hyde D.R."/>
            <person name="Mecklenburg K.L."/>
            <person name="Pollock J.A."/>
            <person name="Vihtelic T.S."/>
            <person name="Benzer S."/>
        </authorList>
    </citation>
    <scope>NUCLEOTIDE SEQUENCE [GENOMIC DNA]</scope>
</reference>
<reference key="3">
    <citation type="journal article" date="2000" name="Science">
        <title>The genome sequence of Drosophila melanogaster.</title>
        <authorList>
            <person name="Adams M.D."/>
            <person name="Celniker S.E."/>
            <person name="Holt R.A."/>
            <person name="Evans C.A."/>
            <person name="Gocayne J.D."/>
            <person name="Amanatides P.G."/>
            <person name="Scherer S.E."/>
            <person name="Li P.W."/>
            <person name="Hoskins R.A."/>
            <person name="Galle R.F."/>
            <person name="George R.A."/>
            <person name="Lewis S.E."/>
            <person name="Richards S."/>
            <person name="Ashburner M."/>
            <person name="Henderson S.N."/>
            <person name="Sutton G.G."/>
            <person name="Wortman J.R."/>
            <person name="Yandell M.D."/>
            <person name="Zhang Q."/>
            <person name="Chen L.X."/>
            <person name="Brandon R.C."/>
            <person name="Rogers Y.-H.C."/>
            <person name="Blazej R.G."/>
            <person name="Champe M."/>
            <person name="Pfeiffer B.D."/>
            <person name="Wan K.H."/>
            <person name="Doyle C."/>
            <person name="Baxter E.G."/>
            <person name="Helt G."/>
            <person name="Nelson C.R."/>
            <person name="Miklos G.L.G."/>
            <person name="Abril J.F."/>
            <person name="Agbayani A."/>
            <person name="An H.-J."/>
            <person name="Andrews-Pfannkoch C."/>
            <person name="Baldwin D."/>
            <person name="Ballew R.M."/>
            <person name="Basu A."/>
            <person name="Baxendale J."/>
            <person name="Bayraktaroglu L."/>
            <person name="Beasley E.M."/>
            <person name="Beeson K.Y."/>
            <person name="Benos P.V."/>
            <person name="Berman B.P."/>
            <person name="Bhandari D."/>
            <person name="Bolshakov S."/>
            <person name="Borkova D."/>
            <person name="Botchan M.R."/>
            <person name="Bouck J."/>
            <person name="Brokstein P."/>
            <person name="Brottier P."/>
            <person name="Burtis K.C."/>
            <person name="Busam D.A."/>
            <person name="Butler H."/>
            <person name="Cadieu E."/>
            <person name="Center A."/>
            <person name="Chandra I."/>
            <person name="Cherry J.M."/>
            <person name="Cawley S."/>
            <person name="Dahlke C."/>
            <person name="Davenport L.B."/>
            <person name="Davies P."/>
            <person name="de Pablos B."/>
            <person name="Delcher A."/>
            <person name="Deng Z."/>
            <person name="Mays A.D."/>
            <person name="Dew I."/>
            <person name="Dietz S.M."/>
            <person name="Dodson K."/>
            <person name="Doup L.E."/>
            <person name="Downes M."/>
            <person name="Dugan-Rocha S."/>
            <person name="Dunkov B.C."/>
            <person name="Dunn P."/>
            <person name="Durbin K.J."/>
            <person name="Evangelista C.C."/>
            <person name="Ferraz C."/>
            <person name="Ferriera S."/>
            <person name="Fleischmann W."/>
            <person name="Fosler C."/>
            <person name="Gabrielian A.E."/>
            <person name="Garg N.S."/>
            <person name="Gelbart W.M."/>
            <person name="Glasser K."/>
            <person name="Glodek A."/>
            <person name="Gong F."/>
            <person name="Gorrell J.H."/>
            <person name="Gu Z."/>
            <person name="Guan P."/>
            <person name="Harris M."/>
            <person name="Harris N.L."/>
            <person name="Harvey D.A."/>
            <person name="Heiman T.J."/>
            <person name="Hernandez J.R."/>
            <person name="Houck J."/>
            <person name="Hostin D."/>
            <person name="Houston K.A."/>
            <person name="Howland T.J."/>
            <person name="Wei M.-H."/>
            <person name="Ibegwam C."/>
            <person name="Jalali M."/>
            <person name="Kalush F."/>
            <person name="Karpen G.H."/>
            <person name="Ke Z."/>
            <person name="Kennison J.A."/>
            <person name="Ketchum K.A."/>
            <person name="Kimmel B.E."/>
            <person name="Kodira C.D."/>
            <person name="Kraft C.L."/>
            <person name="Kravitz S."/>
            <person name="Kulp D."/>
            <person name="Lai Z."/>
            <person name="Lasko P."/>
            <person name="Lei Y."/>
            <person name="Levitsky A.A."/>
            <person name="Li J.H."/>
            <person name="Li Z."/>
            <person name="Liang Y."/>
            <person name="Lin X."/>
            <person name="Liu X."/>
            <person name="Mattei B."/>
            <person name="McIntosh T.C."/>
            <person name="McLeod M.P."/>
            <person name="McPherson D."/>
            <person name="Merkulov G."/>
            <person name="Milshina N.V."/>
            <person name="Mobarry C."/>
            <person name="Morris J."/>
            <person name="Moshrefi A."/>
            <person name="Mount S.M."/>
            <person name="Moy M."/>
            <person name="Murphy B."/>
            <person name="Murphy L."/>
            <person name="Muzny D.M."/>
            <person name="Nelson D.L."/>
            <person name="Nelson D.R."/>
            <person name="Nelson K.A."/>
            <person name="Nixon K."/>
            <person name="Nusskern D.R."/>
            <person name="Pacleb J.M."/>
            <person name="Palazzolo M."/>
            <person name="Pittman G.S."/>
            <person name="Pan S."/>
            <person name="Pollard J."/>
            <person name="Puri V."/>
            <person name="Reese M.G."/>
            <person name="Reinert K."/>
            <person name="Remington K."/>
            <person name="Saunders R.D.C."/>
            <person name="Scheeler F."/>
            <person name="Shen H."/>
            <person name="Shue B.C."/>
            <person name="Siden-Kiamos I."/>
            <person name="Simpson M."/>
            <person name="Skupski M.P."/>
            <person name="Smith T.J."/>
            <person name="Spier E."/>
            <person name="Spradling A.C."/>
            <person name="Stapleton M."/>
            <person name="Strong R."/>
            <person name="Sun E."/>
            <person name="Svirskas R."/>
            <person name="Tector C."/>
            <person name="Turner R."/>
            <person name="Venter E."/>
            <person name="Wang A.H."/>
            <person name="Wang X."/>
            <person name="Wang Z.-Y."/>
            <person name="Wassarman D.A."/>
            <person name="Weinstock G.M."/>
            <person name="Weissenbach J."/>
            <person name="Williams S.M."/>
            <person name="Woodage T."/>
            <person name="Worley K.C."/>
            <person name="Wu D."/>
            <person name="Yang S."/>
            <person name="Yao Q.A."/>
            <person name="Ye J."/>
            <person name="Yeh R.-F."/>
            <person name="Zaveri J.S."/>
            <person name="Zhan M."/>
            <person name="Zhang G."/>
            <person name="Zhao Q."/>
            <person name="Zheng L."/>
            <person name="Zheng X.H."/>
            <person name="Zhong F.N."/>
            <person name="Zhong W."/>
            <person name="Zhou X."/>
            <person name="Zhu S.C."/>
            <person name="Zhu X."/>
            <person name="Smith H.O."/>
            <person name="Gibbs R.A."/>
            <person name="Myers E.W."/>
            <person name="Rubin G.M."/>
            <person name="Venter J.C."/>
        </authorList>
    </citation>
    <scope>NUCLEOTIDE SEQUENCE [LARGE SCALE GENOMIC DNA]</scope>
    <source>
        <strain>Berkeley</strain>
    </source>
</reference>
<reference key="4">
    <citation type="journal article" date="2002" name="Genome Biol.">
        <title>Annotation of the Drosophila melanogaster euchromatic genome: a systematic review.</title>
        <authorList>
            <person name="Misra S."/>
            <person name="Crosby M.A."/>
            <person name="Mungall C.J."/>
            <person name="Matthews B.B."/>
            <person name="Campbell K.S."/>
            <person name="Hradecky P."/>
            <person name="Huang Y."/>
            <person name="Kaminker J.S."/>
            <person name="Millburn G.H."/>
            <person name="Prochnik S.E."/>
            <person name="Smith C.D."/>
            <person name="Tupy J.L."/>
            <person name="Whitfield E.J."/>
            <person name="Bayraktaroglu L."/>
            <person name="Berman B.P."/>
            <person name="Bettencourt B.R."/>
            <person name="Celniker S.E."/>
            <person name="de Grey A.D.N.J."/>
            <person name="Drysdale R.A."/>
            <person name="Harris N.L."/>
            <person name="Richter J."/>
            <person name="Russo S."/>
            <person name="Schroeder A.J."/>
            <person name="Shu S.Q."/>
            <person name="Stapleton M."/>
            <person name="Yamada C."/>
            <person name="Ashburner M."/>
            <person name="Gelbart W.M."/>
            <person name="Rubin G.M."/>
            <person name="Lewis S.E."/>
        </authorList>
    </citation>
    <scope>GENOME REANNOTATION</scope>
    <source>
        <strain>Berkeley</strain>
    </source>
</reference>
<reference key="5">
    <citation type="journal article" date="2002" name="Genome Biol.">
        <title>A Drosophila full-length cDNA resource.</title>
        <authorList>
            <person name="Stapleton M."/>
            <person name="Carlson J.W."/>
            <person name="Brokstein P."/>
            <person name="Yu C."/>
            <person name="Champe M."/>
            <person name="George R.A."/>
            <person name="Guarin H."/>
            <person name="Kronmiller B."/>
            <person name="Pacleb J.M."/>
            <person name="Park S."/>
            <person name="Wan K.H."/>
            <person name="Rubin G.M."/>
            <person name="Celniker S.E."/>
        </authorList>
    </citation>
    <scope>NUCLEOTIDE SEQUENCE [LARGE SCALE MRNA]</scope>
    <source>
        <strain>Berkeley</strain>
        <tissue>Head</tissue>
    </source>
</reference>
<reference key="6">
    <citation type="journal article" date="1991" name="Biochem. Biophys. Res. Commun.">
        <title>Phosrestins I and II: arrestin homologs which undergo differential light-induced phosphorylation in the Drosophila photoreceptor in vivo.</title>
        <authorList>
            <person name="Matsumoto H."/>
            <person name="Yamada T."/>
        </authorList>
    </citation>
    <scope>PHOSPHORYLATION</scope>
</reference>
<reference key="7">
    <citation type="journal article" date="1993" name="Science">
        <title>Arrestin function in inactivation of G protein-coupled receptor rhodopsin in vivo.</title>
        <authorList>
            <person name="Dolph P.J."/>
            <person name="Ranganathan R."/>
            <person name="Colley N.J."/>
            <person name="Hardy R.W."/>
            <person name="Socolich M."/>
            <person name="Zuker C.S."/>
        </authorList>
    </citation>
    <scope>FUNCTION</scope>
    <scope>SUBCELLULAR LOCATION</scope>
    <scope>TISSUE SPECIFICITY</scope>
</reference>
<reference key="8">
    <citation type="journal article" date="2023" name="IScience">
        <title>Visual and circadian regulation of Drosophila BDBT and BDBT effects on DBT and PER localization.</title>
        <authorList>
            <person name="Nolan R.B."/>
            <person name="Bontrager C."/>
            <person name="Bowser A."/>
            <person name="Corley A."/>
            <person name="Fiedler H."/>
            <person name="Flathers C."/>
            <person name="Francis L."/>
            <person name="Le A."/>
            <person name="Mahmoudjafari S."/>
            <person name="Nim T."/>
            <person name="Muolo C.E."/>
            <person name="Shores B."/>
            <person name="Viermann C."/>
            <person name="Waldren A."/>
            <person name="Zatezalo C."/>
            <person name="Fan J.Y."/>
            <person name="Price J.L."/>
        </authorList>
    </citation>
    <scope>FUNCTION</scope>
</reference>
<protein>
    <recommendedName>
        <fullName>Phosrestin-2</fullName>
    </recommendedName>
    <alternativeName>
        <fullName>Arrestin-1</fullName>
    </alternativeName>
    <alternativeName>
        <fullName>Arrestin-A</fullName>
    </alternativeName>
    <alternativeName>
        <fullName>Phosrestin II</fullName>
    </alternativeName>
</protein>
<evidence type="ECO:0000269" key="1">
    <source>
    </source>
</evidence>
<evidence type="ECO:0000269" key="2">
    <source>
    </source>
</evidence>
<evidence type="ECO:0000269" key="3">
    <source>
    </source>
</evidence>
<evidence type="ECO:0000269" key="4">
    <source>
    </source>
</evidence>
<evidence type="ECO:0000305" key="5"/>
<organism>
    <name type="scientific">Drosophila melanogaster</name>
    <name type="common">Fruit fly</name>
    <dbReference type="NCBI Taxonomy" id="7227"/>
    <lineage>
        <taxon>Eukaryota</taxon>
        <taxon>Metazoa</taxon>
        <taxon>Ecdysozoa</taxon>
        <taxon>Arthropoda</taxon>
        <taxon>Hexapoda</taxon>
        <taxon>Insecta</taxon>
        <taxon>Pterygota</taxon>
        <taxon>Neoptera</taxon>
        <taxon>Endopterygota</taxon>
        <taxon>Diptera</taxon>
        <taxon>Brachycera</taxon>
        <taxon>Muscomorpha</taxon>
        <taxon>Ephydroidea</taxon>
        <taxon>Drosophilidae</taxon>
        <taxon>Drosophila</taxon>
        <taxon>Sophophora</taxon>
    </lineage>
</organism>
<dbReference type="EMBL" id="M30177">
    <property type="status" value="NOT_ANNOTATED_CDS"/>
    <property type="molecule type" value="Genomic_DNA"/>
</dbReference>
<dbReference type="EMBL" id="M30140">
    <property type="protein sequence ID" value="AAA28380.1"/>
    <property type="molecule type" value="Genomic_DNA"/>
</dbReference>
<dbReference type="EMBL" id="AE014134">
    <property type="protein sequence ID" value="AAF53644.1"/>
    <property type="molecule type" value="Genomic_DNA"/>
</dbReference>
<dbReference type="EMBL" id="AY061824">
    <property type="protein sequence ID" value="AAL27635.1"/>
    <property type="molecule type" value="mRNA"/>
</dbReference>
<dbReference type="PIR" id="A34867">
    <property type="entry name" value="A34867"/>
</dbReference>
<dbReference type="RefSeq" id="NP_001246073.1">
    <property type="nucleotide sequence ID" value="NM_001259144.2"/>
</dbReference>
<dbReference type="RefSeq" id="NP_476681.1">
    <property type="nucleotide sequence ID" value="NM_057333.4"/>
</dbReference>
<dbReference type="SMR" id="P15372"/>
<dbReference type="BioGRID" id="61074">
    <property type="interactions" value="24"/>
</dbReference>
<dbReference type="DIP" id="DIP-19039N"/>
<dbReference type="FunCoup" id="P15372">
    <property type="interactions" value="9"/>
</dbReference>
<dbReference type="IntAct" id="P15372">
    <property type="interactions" value="12"/>
</dbReference>
<dbReference type="STRING" id="7227.FBpp0298351"/>
<dbReference type="PaxDb" id="7227-FBpp0298351"/>
<dbReference type="DNASU" id="35078"/>
<dbReference type="EnsemblMetazoa" id="FBtr0081030">
    <property type="protein sequence ID" value="FBpp0080583"/>
    <property type="gene ID" value="FBgn0000120"/>
</dbReference>
<dbReference type="EnsemblMetazoa" id="FBtr0307350">
    <property type="protein sequence ID" value="FBpp0298351"/>
    <property type="gene ID" value="FBgn0000120"/>
</dbReference>
<dbReference type="GeneID" id="35078"/>
<dbReference type="KEGG" id="dme:Dmel_CG5711"/>
<dbReference type="AGR" id="FB:FBgn0000120"/>
<dbReference type="CTD" id="35078"/>
<dbReference type="FlyBase" id="FBgn0000120">
    <property type="gene designation" value="Arr1"/>
</dbReference>
<dbReference type="VEuPathDB" id="VectorBase:FBgn0000120"/>
<dbReference type="eggNOG" id="KOG3865">
    <property type="taxonomic scope" value="Eukaryota"/>
</dbReference>
<dbReference type="GeneTree" id="ENSGT00950000182887"/>
<dbReference type="HOGENOM" id="CLU_033484_1_1_1"/>
<dbReference type="InParanoid" id="P15372"/>
<dbReference type="OMA" id="ETQDGCP"/>
<dbReference type="OrthoDB" id="298939at2759"/>
<dbReference type="PhylomeDB" id="P15372"/>
<dbReference type="Reactome" id="R-DME-418555">
    <property type="pathway name" value="G alpha (s) signalling events"/>
</dbReference>
<dbReference type="Reactome" id="R-DME-432720">
    <property type="pathway name" value="Lysosome Vesicle Biogenesis"/>
</dbReference>
<dbReference type="Reactome" id="R-DME-432722">
    <property type="pathway name" value="Golgi Associated Vesicle Biogenesis"/>
</dbReference>
<dbReference type="Reactome" id="R-DME-456926">
    <property type="pathway name" value="Thrombin signalling through proteinase activated receptors (PARs)"/>
</dbReference>
<dbReference type="Reactome" id="R-DME-5674135">
    <property type="pathway name" value="MAP2K and MAPK activation"/>
</dbReference>
<dbReference type="Reactome" id="R-DME-5689880">
    <property type="pathway name" value="Ub-specific processing proteases"/>
</dbReference>
<dbReference type="Reactome" id="R-DME-8856825">
    <property type="pathway name" value="Cargo recognition for clathrin-mediated endocytosis"/>
</dbReference>
<dbReference type="Reactome" id="R-DME-8856828">
    <property type="pathway name" value="Clathrin-mediated endocytosis"/>
</dbReference>
<dbReference type="Reactome" id="R-DME-9839389">
    <property type="pathway name" value="TGFBR3 regulates TGF-beta signaling"/>
</dbReference>
<dbReference type="SignaLink" id="P15372"/>
<dbReference type="BioGRID-ORCS" id="35078">
    <property type="hits" value="0 hits in 1 CRISPR screen"/>
</dbReference>
<dbReference type="ChiTaRS" id="Arr1">
    <property type="organism name" value="fly"/>
</dbReference>
<dbReference type="GenomeRNAi" id="35078"/>
<dbReference type="PRO" id="PR:P15372"/>
<dbReference type="Proteomes" id="UP000000803">
    <property type="component" value="Chromosome 2L"/>
</dbReference>
<dbReference type="Bgee" id="FBgn0000120">
    <property type="expression patterns" value="Expressed in outer photoreceptor cell (Drosophila) in insect head and 102 other cell types or tissues"/>
</dbReference>
<dbReference type="ExpressionAtlas" id="P15372">
    <property type="expression patterns" value="baseline and differential"/>
</dbReference>
<dbReference type="GO" id="GO:0005737">
    <property type="term" value="C:cytoplasm"/>
    <property type="evidence" value="ECO:0000314"/>
    <property type="project" value="FlyBase"/>
</dbReference>
<dbReference type="GO" id="GO:0016028">
    <property type="term" value="C:rhabdomere"/>
    <property type="evidence" value="ECO:0000314"/>
    <property type="project" value="FlyBase"/>
</dbReference>
<dbReference type="GO" id="GO:0001664">
    <property type="term" value="F:G protein-coupled receptor binding"/>
    <property type="evidence" value="ECO:0000318"/>
    <property type="project" value="GO_Central"/>
</dbReference>
<dbReference type="GO" id="GO:0002046">
    <property type="term" value="F:opsin binding"/>
    <property type="evidence" value="ECO:0000250"/>
    <property type="project" value="FlyBase"/>
</dbReference>
<dbReference type="GO" id="GO:0002029">
    <property type="term" value="P:desensitization of G protein-coupled receptor signaling pathway"/>
    <property type="evidence" value="ECO:0000315"/>
    <property type="project" value="FlyBase"/>
</dbReference>
<dbReference type="GO" id="GO:0006897">
    <property type="term" value="P:endocytosis"/>
    <property type="evidence" value="ECO:0000315"/>
    <property type="project" value="FlyBase"/>
</dbReference>
<dbReference type="GO" id="GO:0002031">
    <property type="term" value="P:G protein-coupled receptor internalization"/>
    <property type="evidence" value="ECO:0000318"/>
    <property type="project" value="GO_Central"/>
</dbReference>
<dbReference type="GO" id="GO:0016059">
    <property type="term" value="P:negative regulation of opsin-mediated signaling pathway"/>
    <property type="evidence" value="ECO:0000316"/>
    <property type="project" value="FlyBase"/>
</dbReference>
<dbReference type="GO" id="GO:0016060">
    <property type="term" value="P:negative regulation of phospholipase C-activating phototransduction signaling pathway"/>
    <property type="evidence" value="ECO:0000316"/>
    <property type="project" value="FlyBase"/>
</dbReference>
<dbReference type="GO" id="GO:0045494">
    <property type="term" value="P:photoreceptor cell maintenance"/>
    <property type="evidence" value="ECO:0000315"/>
    <property type="project" value="FlyBase"/>
</dbReference>
<dbReference type="GO" id="GO:0007608">
    <property type="term" value="P:sensory perception of smell"/>
    <property type="evidence" value="ECO:0000315"/>
    <property type="project" value="FlyBase"/>
</dbReference>
<dbReference type="GO" id="GO:0007165">
    <property type="term" value="P:signal transduction"/>
    <property type="evidence" value="ECO:0007669"/>
    <property type="project" value="InterPro"/>
</dbReference>
<dbReference type="GO" id="GO:0007601">
    <property type="term" value="P:visual perception"/>
    <property type="evidence" value="ECO:0007669"/>
    <property type="project" value="UniProtKB-KW"/>
</dbReference>
<dbReference type="FunFam" id="2.60.40.640:FF:000022">
    <property type="entry name" value="Arrestin 1"/>
    <property type="match status" value="1"/>
</dbReference>
<dbReference type="FunFam" id="2.60.40.840:FF:000002">
    <property type="entry name" value="Arrestin 3"/>
    <property type="match status" value="1"/>
</dbReference>
<dbReference type="Gene3D" id="2.60.40.640">
    <property type="match status" value="1"/>
</dbReference>
<dbReference type="Gene3D" id="2.60.40.840">
    <property type="match status" value="1"/>
</dbReference>
<dbReference type="InterPro" id="IPR000698">
    <property type="entry name" value="Arrestin"/>
</dbReference>
<dbReference type="InterPro" id="IPR014752">
    <property type="entry name" value="Arrestin-like_C"/>
</dbReference>
<dbReference type="InterPro" id="IPR011021">
    <property type="entry name" value="Arrestin-like_N"/>
</dbReference>
<dbReference type="InterPro" id="IPR011022">
    <property type="entry name" value="Arrestin_C-like"/>
</dbReference>
<dbReference type="InterPro" id="IPR017864">
    <property type="entry name" value="Arrestin_CS"/>
</dbReference>
<dbReference type="InterPro" id="IPR014753">
    <property type="entry name" value="Arrestin_N"/>
</dbReference>
<dbReference type="InterPro" id="IPR014756">
    <property type="entry name" value="Ig_E-set"/>
</dbReference>
<dbReference type="PANTHER" id="PTHR11792">
    <property type="entry name" value="ARRESTIN"/>
    <property type="match status" value="1"/>
</dbReference>
<dbReference type="PANTHER" id="PTHR11792:SF16">
    <property type="entry name" value="PHOSRESTIN-2"/>
    <property type="match status" value="1"/>
</dbReference>
<dbReference type="Pfam" id="PF02752">
    <property type="entry name" value="Arrestin_C"/>
    <property type="match status" value="1"/>
</dbReference>
<dbReference type="Pfam" id="PF00339">
    <property type="entry name" value="Arrestin_N"/>
    <property type="match status" value="1"/>
</dbReference>
<dbReference type="PRINTS" id="PR00309">
    <property type="entry name" value="ARRESTIN"/>
</dbReference>
<dbReference type="SMART" id="SM01017">
    <property type="entry name" value="Arrestin_C"/>
    <property type="match status" value="1"/>
</dbReference>
<dbReference type="SUPFAM" id="SSF81296">
    <property type="entry name" value="E set domains"/>
    <property type="match status" value="2"/>
</dbReference>
<dbReference type="PROSITE" id="PS00295">
    <property type="entry name" value="ARRESTINS"/>
    <property type="match status" value="1"/>
</dbReference>
<proteinExistence type="evidence at protein level"/>
<gene>
    <name type="primary">Arr1</name>
    <name type="synonym">ArrA</name>
    <name type="ORF">CG5711</name>
</gene>
<feature type="chain" id="PRO_0000205215" description="Phosrestin-2">
    <location>
        <begin position="1"/>
        <end position="364"/>
    </location>
</feature>
<name>ARRA_DROME</name>
<keyword id="KW-0966">Cell projection</keyword>
<keyword id="KW-0597">Phosphoprotein</keyword>
<keyword id="KW-1185">Reference proteome</keyword>
<keyword id="KW-0716">Sensory transduction</keyword>
<keyword id="KW-0844">Vision</keyword>
<accession>P15372</accession>
<accession>Q9VJA8</accession>